<gene>
    <name evidence="1" type="primary">groES</name>
    <name evidence="1" type="synonym">groS</name>
    <name type="ordered locus">TP_1013</name>
</gene>
<comment type="function">
    <text evidence="1">Together with the chaperonin GroEL, plays an essential role in assisting protein folding. The GroEL-GroES system forms a nano-cage that allows encapsulation of the non-native substrate proteins and provides a physical environment optimized to promote and accelerate protein folding. GroES binds to the apical surface of the GroEL ring, thereby capping the opening of the GroEL channel.</text>
</comment>
<comment type="subunit">
    <text evidence="1">Heptamer of 7 subunits arranged in a ring. Interacts with the chaperonin GroEL.</text>
</comment>
<comment type="subcellular location">
    <subcellularLocation>
        <location evidence="1">Cytoplasm</location>
    </subcellularLocation>
</comment>
<comment type="similarity">
    <text evidence="1 2">Belongs to the GroES chaperonin family.</text>
</comment>
<accession>O83977</accession>
<evidence type="ECO:0000255" key="1">
    <source>
        <dbReference type="HAMAP-Rule" id="MF_00580"/>
    </source>
</evidence>
<evidence type="ECO:0000305" key="2"/>
<proteinExistence type="inferred from homology"/>
<organism>
    <name type="scientific">Treponema pallidum (strain Nichols)</name>
    <dbReference type="NCBI Taxonomy" id="243276"/>
    <lineage>
        <taxon>Bacteria</taxon>
        <taxon>Pseudomonadati</taxon>
        <taxon>Spirochaetota</taxon>
        <taxon>Spirochaetia</taxon>
        <taxon>Spirochaetales</taxon>
        <taxon>Treponemataceae</taxon>
        <taxon>Treponema</taxon>
    </lineage>
</organism>
<feature type="chain" id="PRO_0000174890" description="Co-chaperonin GroES">
    <location>
        <begin position="1"/>
        <end position="88"/>
    </location>
</feature>
<dbReference type="EMBL" id="AE000520">
    <property type="protein sequence ID" value="AAC65964.1"/>
    <property type="molecule type" value="Genomic_DNA"/>
</dbReference>
<dbReference type="PIR" id="A71253">
    <property type="entry name" value="A71253"/>
</dbReference>
<dbReference type="RefSeq" id="WP_010882457.1">
    <property type="nucleotide sequence ID" value="NC_021490.2"/>
</dbReference>
<dbReference type="SMR" id="O83977"/>
<dbReference type="IntAct" id="O83977">
    <property type="interactions" value="15"/>
</dbReference>
<dbReference type="STRING" id="243276.TP_1013"/>
<dbReference type="EnsemblBacteria" id="AAC65964">
    <property type="protein sequence ID" value="AAC65964"/>
    <property type="gene ID" value="TP_1013"/>
</dbReference>
<dbReference type="KEGG" id="tpa:TP_1013"/>
<dbReference type="KEGG" id="tpw:TPANIC_1013"/>
<dbReference type="eggNOG" id="COG0234">
    <property type="taxonomic scope" value="Bacteria"/>
</dbReference>
<dbReference type="HOGENOM" id="CLU_132825_2_0_12"/>
<dbReference type="OrthoDB" id="9806791at2"/>
<dbReference type="Proteomes" id="UP000000811">
    <property type="component" value="Chromosome"/>
</dbReference>
<dbReference type="GO" id="GO:0005737">
    <property type="term" value="C:cytoplasm"/>
    <property type="evidence" value="ECO:0007669"/>
    <property type="project" value="UniProtKB-SubCell"/>
</dbReference>
<dbReference type="GO" id="GO:0005524">
    <property type="term" value="F:ATP binding"/>
    <property type="evidence" value="ECO:0007669"/>
    <property type="project" value="InterPro"/>
</dbReference>
<dbReference type="GO" id="GO:0046872">
    <property type="term" value="F:metal ion binding"/>
    <property type="evidence" value="ECO:0007669"/>
    <property type="project" value="TreeGrafter"/>
</dbReference>
<dbReference type="GO" id="GO:0044183">
    <property type="term" value="F:protein folding chaperone"/>
    <property type="evidence" value="ECO:0007669"/>
    <property type="project" value="InterPro"/>
</dbReference>
<dbReference type="GO" id="GO:0051087">
    <property type="term" value="F:protein-folding chaperone binding"/>
    <property type="evidence" value="ECO:0007669"/>
    <property type="project" value="TreeGrafter"/>
</dbReference>
<dbReference type="GO" id="GO:0051082">
    <property type="term" value="F:unfolded protein binding"/>
    <property type="evidence" value="ECO:0007669"/>
    <property type="project" value="TreeGrafter"/>
</dbReference>
<dbReference type="GO" id="GO:0051085">
    <property type="term" value="P:chaperone cofactor-dependent protein refolding"/>
    <property type="evidence" value="ECO:0007669"/>
    <property type="project" value="TreeGrafter"/>
</dbReference>
<dbReference type="CDD" id="cd00320">
    <property type="entry name" value="cpn10"/>
    <property type="match status" value="1"/>
</dbReference>
<dbReference type="FunFam" id="2.30.33.40:FF:000001">
    <property type="entry name" value="10 kDa chaperonin"/>
    <property type="match status" value="1"/>
</dbReference>
<dbReference type="Gene3D" id="2.30.33.40">
    <property type="entry name" value="GroES chaperonin"/>
    <property type="match status" value="1"/>
</dbReference>
<dbReference type="HAMAP" id="MF_00580">
    <property type="entry name" value="CH10"/>
    <property type="match status" value="1"/>
</dbReference>
<dbReference type="InterPro" id="IPR020818">
    <property type="entry name" value="Chaperonin_GroES"/>
</dbReference>
<dbReference type="InterPro" id="IPR037124">
    <property type="entry name" value="Chaperonin_GroES_sf"/>
</dbReference>
<dbReference type="InterPro" id="IPR018369">
    <property type="entry name" value="Chaprnonin_Cpn10_CS"/>
</dbReference>
<dbReference type="InterPro" id="IPR011032">
    <property type="entry name" value="GroES-like_sf"/>
</dbReference>
<dbReference type="NCBIfam" id="NF001531">
    <property type="entry name" value="PRK00364.2-2"/>
    <property type="match status" value="1"/>
</dbReference>
<dbReference type="PANTHER" id="PTHR10772">
    <property type="entry name" value="10 KDA HEAT SHOCK PROTEIN"/>
    <property type="match status" value="1"/>
</dbReference>
<dbReference type="PANTHER" id="PTHR10772:SF63">
    <property type="entry name" value="20 KDA CHAPERONIN, CHLOROPLASTIC"/>
    <property type="match status" value="1"/>
</dbReference>
<dbReference type="Pfam" id="PF00166">
    <property type="entry name" value="Cpn10"/>
    <property type="match status" value="1"/>
</dbReference>
<dbReference type="PRINTS" id="PR00297">
    <property type="entry name" value="CHAPERONIN10"/>
</dbReference>
<dbReference type="SMART" id="SM00883">
    <property type="entry name" value="Cpn10"/>
    <property type="match status" value="1"/>
</dbReference>
<dbReference type="SUPFAM" id="SSF50129">
    <property type="entry name" value="GroES-like"/>
    <property type="match status" value="1"/>
</dbReference>
<dbReference type="PROSITE" id="PS00681">
    <property type="entry name" value="CHAPERONINS_CPN10"/>
    <property type="match status" value="1"/>
</dbReference>
<protein>
    <recommendedName>
        <fullName evidence="1">Co-chaperonin GroES</fullName>
    </recommendedName>
    <alternativeName>
        <fullName evidence="1">10 kDa chaperonin</fullName>
    </alternativeName>
    <alternativeName>
        <fullName evidence="1">Chaperonin-10</fullName>
        <shortName evidence="1">Cpn10</shortName>
    </alternativeName>
</protein>
<reference key="1">
    <citation type="journal article" date="1998" name="Science">
        <title>Complete genome sequence of Treponema pallidum, the syphilis spirochete.</title>
        <authorList>
            <person name="Fraser C.M."/>
            <person name="Norris S.J."/>
            <person name="Weinstock G.M."/>
            <person name="White O."/>
            <person name="Sutton G.G."/>
            <person name="Dodson R.J."/>
            <person name="Gwinn M.L."/>
            <person name="Hickey E.K."/>
            <person name="Clayton R.A."/>
            <person name="Ketchum K.A."/>
            <person name="Sodergren E."/>
            <person name="Hardham J.M."/>
            <person name="McLeod M.P."/>
            <person name="Salzberg S.L."/>
            <person name="Peterson J.D."/>
            <person name="Khalak H.G."/>
            <person name="Richardson D.L."/>
            <person name="Howell J.K."/>
            <person name="Chidambaram M."/>
            <person name="Utterback T.R."/>
            <person name="McDonald L.A."/>
            <person name="Artiach P."/>
            <person name="Bowman C."/>
            <person name="Cotton M.D."/>
            <person name="Fujii C."/>
            <person name="Garland S.A."/>
            <person name="Hatch B."/>
            <person name="Horst K."/>
            <person name="Roberts K.M."/>
            <person name="Sandusky M."/>
            <person name="Weidman J.F."/>
            <person name="Smith H.O."/>
            <person name="Venter J.C."/>
        </authorList>
    </citation>
    <scope>NUCLEOTIDE SEQUENCE [LARGE SCALE GENOMIC DNA]</scope>
    <source>
        <strain>Nichols</strain>
    </source>
</reference>
<sequence>MKIIPLADRVLVKTDKSETKTASGIIIPDTAQEKMQSGTVIAVGSDSEKIKVSVGQRVMHDKYAGNPVKIDGEEHLLLKGADILAVIE</sequence>
<keyword id="KW-0143">Chaperone</keyword>
<keyword id="KW-0963">Cytoplasm</keyword>
<keyword id="KW-1185">Reference proteome</keyword>
<name>CH10_TREPA</name>